<organism>
    <name type="scientific">Escherichia coli (strain UTI89 / UPEC)</name>
    <dbReference type="NCBI Taxonomy" id="364106"/>
    <lineage>
        <taxon>Bacteria</taxon>
        <taxon>Pseudomonadati</taxon>
        <taxon>Pseudomonadota</taxon>
        <taxon>Gammaproteobacteria</taxon>
        <taxon>Enterobacterales</taxon>
        <taxon>Enterobacteriaceae</taxon>
        <taxon>Escherichia</taxon>
    </lineage>
</organism>
<proteinExistence type="inferred from homology"/>
<reference key="1">
    <citation type="journal article" date="2006" name="Proc. Natl. Acad. Sci. U.S.A.">
        <title>Identification of genes subject to positive selection in uropathogenic strains of Escherichia coli: a comparative genomics approach.</title>
        <authorList>
            <person name="Chen S.L."/>
            <person name="Hung C.-S."/>
            <person name="Xu J."/>
            <person name="Reigstad C.S."/>
            <person name="Magrini V."/>
            <person name="Sabo A."/>
            <person name="Blasiar D."/>
            <person name="Bieri T."/>
            <person name="Meyer R.R."/>
            <person name="Ozersky P."/>
            <person name="Armstrong J.R."/>
            <person name="Fulton R.S."/>
            <person name="Latreille J.P."/>
            <person name="Spieth J."/>
            <person name="Hooton T.M."/>
            <person name="Mardis E.R."/>
            <person name="Hultgren S.J."/>
            <person name="Gordon J.I."/>
        </authorList>
    </citation>
    <scope>NUCLEOTIDE SEQUENCE [LARGE SCALE GENOMIC DNA]</scope>
    <source>
        <strain>UTI89 / UPEC</strain>
    </source>
</reference>
<protein>
    <recommendedName>
        <fullName evidence="1">Glutamate 5-kinase</fullName>
        <ecNumber evidence="1">2.7.2.11</ecNumber>
    </recommendedName>
    <alternativeName>
        <fullName evidence="1">Gamma-glutamyl kinase</fullName>
        <shortName evidence="1">GK</shortName>
    </alternativeName>
</protein>
<sequence length="367" mass="39057">MSDSQTLVVKLGTSVLTGGSRRLNRAHIVELVRQCAQLHAAGHRIVIVTSGAIAAGREHLGYPELPATIASKQLLAAVGQSRLIQLWEQLFSIYGIHVGQMLLTRADMEDRERFLNARDTLRALLDNNIVPVINENDAVATAEIKVGDNDNLSALAAILAGADKLLLLTDQKGLYTADPRSNPQAELIKDVYGIDDALRAIAGDSVSGLGTGGMSTKLQAADVACRAGIDTIIAAGSKPGVIGDVMEGISVGTLFHAQATPLENRKRWIFGAPPAGEITVDEGATAAILERGSSLLPKGIKSVTGNFSRGEVIRICNLEGRDIAHGVSRYNSDALRRIAGHHSQEIDAILGYEYGPVAVHRDDMITR</sequence>
<dbReference type="EC" id="2.7.2.11" evidence="1"/>
<dbReference type="EMBL" id="CP000243">
    <property type="protein sequence ID" value="ABE05786.1"/>
    <property type="status" value="ALT_INIT"/>
    <property type="molecule type" value="Genomic_DNA"/>
</dbReference>
<dbReference type="RefSeq" id="WP_001285288.1">
    <property type="nucleotide sequence ID" value="NZ_CP064825.1"/>
</dbReference>
<dbReference type="SMR" id="Q1RFS8"/>
<dbReference type="GeneID" id="93777151"/>
<dbReference type="KEGG" id="eci:UTI89_C0283"/>
<dbReference type="HOGENOM" id="CLU_025400_2_0_6"/>
<dbReference type="UniPathway" id="UPA00098">
    <property type="reaction ID" value="UER00359"/>
</dbReference>
<dbReference type="Proteomes" id="UP000001952">
    <property type="component" value="Chromosome"/>
</dbReference>
<dbReference type="GO" id="GO:0005829">
    <property type="term" value="C:cytosol"/>
    <property type="evidence" value="ECO:0007669"/>
    <property type="project" value="TreeGrafter"/>
</dbReference>
<dbReference type="GO" id="GO:0005524">
    <property type="term" value="F:ATP binding"/>
    <property type="evidence" value="ECO:0007669"/>
    <property type="project" value="UniProtKB-KW"/>
</dbReference>
<dbReference type="GO" id="GO:0004349">
    <property type="term" value="F:glutamate 5-kinase activity"/>
    <property type="evidence" value="ECO:0007669"/>
    <property type="project" value="UniProtKB-UniRule"/>
</dbReference>
<dbReference type="GO" id="GO:0003723">
    <property type="term" value="F:RNA binding"/>
    <property type="evidence" value="ECO:0007669"/>
    <property type="project" value="InterPro"/>
</dbReference>
<dbReference type="GO" id="GO:0055129">
    <property type="term" value="P:L-proline biosynthetic process"/>
    <property type="evidence" value="ECO:0007669"/>
    <property type="project" value="UniProtKB-UniRule"/>
</dbReference>
<dbReference type="CDD" id="cd04242">
    <property type="entry name" value="AAK_G5K_ProB"/>
    <property type="match status" value="1"/>
</dbReference>
<dbReference type="CDD" id="cd21157">
    <property type="entry name" value="PUA_G5K"/>
    <property type="match status" value="1"/>
</dbReference>
<dbReference type="FunFam" id="2.30.130.10:FF:000003">
    <property type="entry name" value="Glutamate 5-kinase"/>
    <property type="match status" value="1"/>
</dbReference>
<dbReference type="FunFam" id="3.40.1160.10:FF:000006">
    <property type="entry name" value="Glutamate 5-kinase"/>
    <property type="match status" value="1"/>
</dbReference>
<dbReference type="Gene3D" id="3.40.1160.10">
    <property type="entry name" value="Acetylglutamate kinase-like"/>
    <property type="match status" value="2"/>
</dbReference>
<dbReference type="Gene3D" id="2.30.130.10">
    <property type="entry name" value="PUA domain"/>
    <property type="match status" value="1"/>
</dbReference>
<dbReference type="HAMAP" id="MF_00456">
    <property type="entry name" value="ProB"/>
    <property type="match status" value="1"/>
</dbReference>
<dbReference type="InterPro" id="IPR036393">
    <property type="entry name" value="AceGlu_kinase-like_sf"/>
</dbReference>
<dbReference type="InterPro" id="IPR001048">
    <property type="entry name" value="Asp/Glu/Uridylate_kinase"/>
</dbReference>
<dbReference type="InterPro" id="IPR041739">
    <property type="entry name" value="G5K_ProB"/>
</dbReference>
<dbReference type="InterPro" id="IPR001057">
    <property type="entry name" value="Glu/AcGlu_kinase"/>
</dbReference>
<dbReference type="InterPro" id="IPR011529">
    <property type="entry name" value="Glu_5kinase"/>
</dbReference>
<dbReference type="InterPro" id="IPR005715">
    <property type="entry name" value="Glu_5kinase/COase_Synthase"/>
</dbReference>
<dbReference type="InterPro" id="IPR019797">
    <property type="entry name" value="Glutamate_5-kinase_CS"/>
</dbReference>
<dbReference type="InterPro" id="IPR002478">
    <property type="entry name" value="PUA"/>
</dbReference>
<dbReference type="InterPro" id="IPR015947">
    <property type="entry name" value="PUA-like_sf"/>
</dbReference>
<dbReference type="InterPro" id="IPR036974">
    <property type="entry name" value="PUA_sf"/>
</dbReference>
<dbReference type="NCBIfam" id="TIGR01027">
    <property type="entry name" value="proB"/>
    <property type="match status" value="1"/>
</dbReference>
<dbReference type="PANTHER" id="PTHR43654">
    <property type="entry name" value="GLUTAMATE 5-KINASE"/>
    <property type="match status" value="1"/>
</dbReference>
<dbReference type="PANTHER" id="PTHR43654:SF1">
    <property type="entry name" value="ISOPENTENYL PHOSPHATE KINASE"/>
    <property type="match status" value="1"/>
</dbReference>
<dbReference type="Pfam" id="PF00696">
    <property type="entry name" value="AA_kinase"/>
    <property type="match status" value="1"/>
</dbReference>
<dbReference type="Pfam" id="PF01472">
    <property type="entry name" value="PUA"/>
    <property type="match status" value="1"/>
</dbReference>
<dbReference type="PIRSF" id="PIRSF000729">
    <property type="entry name" value="GK"/>
    <property type="match status" value="1"/>
</dbReference>
<dbReference type="PRINTS" id="PR00474">
    <property type="entry name" value="GLU5KINASE"/>
</dbReference>
<dbReference type="SMART" id="SM00359">
    <property type="entry name" value="PUA"/>
    <property type="match status" value="1"/>
</dbReference>
<dbReference type="SUPFAM" id="SSF53633">
    <property type="entry name" value="Carbamate kinase-like"/>
    <property type="match status" value="1"/>
</dbReference>
<dbReference type="SUPFAM" id="SSF88697">
    <property type="entry name" value="PUA domain-like"/>
    <property type="match status" value="1"/>
</dbReference>
<dbReference type="PROSITE" id="PS00902">
    <property type="entry name" value="GLUTAMATE_5_KINASE"/>
    <property type="match status" value="1"/>
</dbReference>
<dbReference type="PROSITE" id="PS50890">
    <property type="entry name" value="PUA"/>
    <property type="match status" value="1"/>
</dbReference>
<evidence type="ECO:0000255" key="1">
    <source>
        <dbReference type="HAMAP-Rule" id="MF_00456"/>
    </source>
</evidence>
<evidence type="ECO:0000305" key="2"/>
<name>PROB_ECOUT</name>
<keyword id="KW-0028">Amino-acid biosynthesis</keyword>
<keyword id="KW-0067">ATP-binding</keyword>
<keyword id="KW-0963">Cytoplasm</keyword>
<keyword id="KW-0418">Kinase</keyword>
<keyword id="KW-0547">Nucleotide-binding</keyword>
<keyword id="KW-0641">Proline biosynthesis</keyword>
<keyword id="KW-0808">Transferase</keyword>
<feature type="chain" id="PRO_0000252978" description="Glutamate 5-kinase">
    <location>
        <begin position="1"/>
        <end position="367"/>
    </location>
</feature>
<feature type="domain" description="PUA" evidence="1">
    <location>
        <begin position="275"/>
        <end position="353"/>
    </location>
</feature>
<feature type="binding site" evidence="1">
    <location>
        <position position="10"/>
    </location>
    <ligand>
        <name>ATP</name>
        <dbReference type="ChEBI" id="CHEBI:30616"/>
    </ligand>
</feature>
<feature type="binding site" evidence="1">
    <location>
        <position position="50"/>
    </location>
    <ligand>
        <name>substrate</name>
    </ligand>
</feature>
<feature type="binding site" evidence="1">
    <location>
        <position position="137"/>
    </location>
    <ligand>
        <name>substrate</name>
    </ligand>
</feature>
<feature type="binding site" evidence="1">
    <location>
        <position position="149"/>
    </location>
    <ligand>
        <name>substrate</name>
    </ligand>
</feature>
<feature type="binding site" evidence="1">
    <location>
        <begin position="169"/>
        <end position="170"/>
    </location>
    <ligand>
        <name>ATP</name>
        <dbReference type="ChEBI" id="CHEBI:30616"/>
    </ligand>
</feature>
<feature type="binding site" evidence="1">
    <location>
        <begin position="211"/>
        <end position="217"/>
    </location>
    <ligand>
        <name>ATP</name>
        <dbReference type="ChEBI" id="CHEBI:30616"/>
    </ligand>
</feature>
<accession>Q1RFS8</accession>
<comment type="function">
    <text evidence="1">Catalyzes the transfer of a phosphate group to glutamate to form L-glutamate 5-phosphate.</text>
</comment>
<comment type="catalytic activity">
    <reaction evidence="1">
        <text>L-glutamate + ATP = L-glutamyl 5-phosphate + ADP</text>
        <dbReference type="Rhea" id="RHEA:14877"/>
        <dbReference type="ChEBI" id="CHEBI:29985"/>
        <dbReference type="ChEBI" id="CHEBI:30616"/>
        <dbReference type="ChEBI" id="CHEBI:58274"/>
        <dbReference type="ChEBI" id="CHEBI:456216"/>
        <dbReference type="EC" id="2.7.2.11"/>
    </reaction>
</comment>
<comment type="pathway">
    <text evidence="1">Amino-acid biosynthesis; L-proline biosynthesis; L-glutamate 5-semialdehyde from L-glutamate: step 1/2.</text>
</comment>
<comment type="subcellular location">
    <subcellularLocation>
        <location evidence="1">Cytoplasm</location>
    </subcellularLocation>
</comment>
<comment type="similarity">
    <text evidence="1">Belongs to the glutamate 5-kinase family.</text>
</comment>
<comment type="sequence caution" evidence="2">
    <conflict type="erroneous initiation">
        <sequence resource="EMBL-CDS" id="ABE05786"/>
    </conflict>
</comment>
<gene>
    <name evidence="1" type="primary">proB</name>
    <name type="ordered locus">UTI89_C0283</name>
</gene>